<feature type="initiator methionine" description="Removed" evidence="1">
    <location>
        <position position="1"/>
    </location>
</feature>
<feature type="chain" id="PRO_1000117378" description="Formamidopyrimidine-DNA glycosylase">
    <location>
        <begin position="2"/>
        <end position="270"/>
    </location>
</feature>
<feature type="zinc finger region" description="FPG-type" evidence="2">
    <location>
        <begin position="236"/>
        <end position="270"/>
    </location>
</feature>
<feature type="active site" description="Schiff-base intermediate with DNA" evidence="2">
    <location>
        <position position="2"/>
    </location>
</feature>
<feature type="active site" description="Proton donor" evidence="2">
    <location>
        <position position="3"/>
    </location>
</feature>
<feature type="active site" description="Proton donor; for beta-elimination activity" evidence="2">
    <location>
        <position position="58"/>
    </location>
</feature>
<feature type="active site" description="Proton donor; for delta-elimination activity" evidence="2">
    <location>
        <position position="260"/>
    </location>
</feature>
<feature type="binding site" evidence="2">
    <location>
        <position position="91"/>
    </location>
    <ligand>
        <name>DNA</name>
        <dbReference type="ChEBI" id="CHEBI:16991"/>
    </ligand>
</feature>
<feature type="binding site" evidence="2">
    <location>
        <position position="110"/>
    </location>
    <ligand>
        <name>DNA</name>
        <dbReference type="ChEBI" id="CHEBI:16991"/>
    </ligand>
</feature>
<feature type="binding site" evidence="2">
    <location>
        <position position="151"/>
    </location>
    <ligand>
        <name>DNA</name>
        <dbReference type="ChEBI" id="CHEBI:16991"/>
    </ligand>
</feature>
<protein>
    <recommendedName>
        <fullName evidence="2">Formamidopyrimidine-DNA glycosylase</fullName>
        <shortName evidence="2">Fapy-DNA glycosylase</shortName>
        <ecNumber evidence="2">3.2.2.23</ecNumber>
    </recommendedName>
    <alternativeName>
        <fullName evidence="2">DNA-(apurinic or apyrimidinic site) lyase MutM</fullName>
        <shortName evidence="2">AP lyase MutM</shortName>
        <ecNumber evidence="2">4.2.99.18</ecNumber>
    </alternativeName>
</protein>
<name>FPG_ACIF2</name>
<dbReference type="EC" id="3.2.2.23" evidence="2"/>
<dbReference type="EC" id="4.2.99.18" evidence="2"/>
<dbReference type="EMBL" id="CP001219">
    <property type="protein sequence ID" value="ACK78008.1"/>
    <property type="molecule type" value="Genomic_DNA"/>
</dbReference>
<dbReference type="RefSeq" id="WP_009567582.1">
    <property type="nucleotide sequence ID" value="NC_011761.1"/>
</dbReference>
<dbReference type="SMR" id="B7J8I7"/>
<dbReference type="STRING" id="243159.AFE_2758"/>
<dbReference type="PaxDb" id="243159-AFE_2758"/>
<dbReference type="GeneID" id="65281796"/>
<dbReference type="KEGG" id="afr:AFE_2758"/>
<dbReference type="eggNOG" id="COG0266">
    <property type="taxonomic scope" value="Bacteria"/>
</dbReference>
<dbReference type="HOGENOM" id="CLU_038423_1_1_6"/>
<dbReference type="Proteomes" id="UP000001362">
    <property type="component" value="Chromosome"/>
</dbReference>
<dbReference type="GO" id="GO:0034039">
    <property type="term" value="F:8-oxo-7,8-dihydroguanine DNA N-glycosylase activity"/>
    <property type="evidence" value="ECO:0007669"/>
    <property type="project" value="TreeGrafter"/>
</dbReference>
<dbReference type="GO" id="GO:0140078">
    <property type="term" value="F:class I DNA-(apurinic or apyrimidinic site) endonuclease activity"/>
    <property type="evidence" value="ECO:0007669"/>
    <property type="project" value="UniProtKB-EC"/>
</dbReference>
<dbReference type="GO" id="GO:0003684">
    <property type="term" value="F:damaged DNA binding"/>
    <property type="evidence" value="ECO:0007669"/>
    <property type="project" value="InterPro"/>
</dbReference>
<dbReference type="GO" id="GO:0008270">
    <property type="term" value="F:zinc ion binding"/>
    <property type="evidence" value="ECO:0007669"/>
    <property type="project" value="UniProtKB-UniRule"/>
</dbReference>
<dbReference type="GO" id="GO:0006284">
    <property type="term" value="P:base-excision repair"/>
    <property type="evidence" value="ECO:0007669"/>
    <property type="project" value="InterPro"/>
</dbReference>
<dbReference type="CDD" id="cd08966">
    <property type="entry name" value="EcFpg-like_N"/>
    <property type="match status" value="1"/>
</dbReference>
<dbReference type="FunFam" id="1.10.8.50:FF:000003">
    <property type="entry name" value="Formamidopyrimidine-DNA glycosylase"/>
    <property type="match status" value="1"/>
</dbReference>
<dbReference type="FunFam" id="3.20.190.10:FF:000001">
    <property type="entry name" value="Formamidopyrimidine-DNA glycosylase"/>
    <property type="match status" value="1"/>
</dbReference>
<dbReference type="Gene3D" id="1.10.8.50">
    <property type="match status" value="1"/>
</dbReference>
<dbReference type="Gene3D" id="3.20.190.10">
    <property type="entry name" value="MutM-like, N-terminal"/>
    <property type="match status" value="1"/>
</dbReference>
<dbReference type="HAMAP" id="MF_00103">
    <property type="entry name" value="Fapy_DNA_glycosyl"/>
    <property type="match status" value="1"/>
</dbReference>
<dbReference type="InterPro" id="IPR015886">
    <property type="entry name" value="DNA_glyclase/AP_lyase_DNA-bd"/>
</dbReference>
<dbReference type="InterPro" id="IPR015887">
    <property type="entry name" value="DNA_glyclase_Znf_dom_DNA_BS"/>
</dbReference>
<dbReference type="InterPro" id="IPR020629">
    <property type="entry name" value="Formamido-pyr_DNA_Glyclase"/>
</dbReference>
<dbReference type="InterPro" id="IPR012319">
    <property type="entry name" value="FPG_cat"/>
</dbReference>
<dbReference type="InterPro" id="IPR035937">
    <property type="entry name" value="MutM-like_N-ter"/>
</dbReference>
<dbReference type="InterPro" id="IPR010979">
    <property type="entry name" value="Ribosomal_uS13-like_H2TH"/>
</dbReference>
<dbReference type="InterPro" id="IPR000214">
    <property type="entry name" value="Znf_DNA_glyclase/AP_lyase"/>
</dbReference>
<dbReference type="InterPro" id="IPR010663">
    <property type="entry name" value="Znf_FPG/IleRS"/>
</dbReference>
<dbReference type="NCBIfam" id="TIGR00577">
    <property type="entry name" value="fpg"/>
    <property type="match status" value="1"/>
</dbReference>
<dbReference type="NCBIfam" id="NF002211">
    <property type="entry name" value="PRK01103.1"/>
    <property type="match status" value="1"/>
</dbReference>
<dbReference type="PANTHER" id="PTHR22993">
    <property type="entry name" value="FORMAMIDOPYRIMIDINE-DNA GLYCOSYLASE"/>
    <property type="match status" value="1"/>
</dbReference>
<dbReference type="PANTHER" id="PTHR22993:SF9">
    <property type="entry name" value="FORMAMIDOPYRIMIDINE-DNA GLYCOSYLASE"/>
    <property type="match status" value="1"/>
</dbReference>
<dbReference type="Pfam" id="PF01149">
    <property type="entry name" value="Fapy_DNA_glyco"/>
    <property type="match status" value="1"/>
</dbReference>
<dbReference type="Pfam" id="PF06831">
    <property type="entry name" value="H2TH"/>
    <property type="match status" value="1"/>
</dbReference>
<dbReference type="Pfam" id="PF06827">
    <property type="entry name" value="zf-FPG_IleRS"/>
    <property type="match status" value="1"/>
</dbReference>
<dbReference type="SMART" id="SM00898">
    <property type="entry name" value="Fapy_DNA_glyco"/>
    <property type="match status" value="1"/>
</dbReference>
<dbReference type="SMART" id="SM01232">
    <property type="entry name" value="H2TH"/>
    <property type="match status" value="1"/>
</dbReference>
<dbReference type="SUPFAM" id="SSF57716">
    <property type="entry name" value="Glucocorticoid receptor-like (DNA-binding domain)"/>
    <property type="match status" value="1"/>
</dbReference>
<dbReference type="SUPFAM" id="SSF81624">
    <property type="entry name" value="N-terminal domain of MutM-like DNA repair proteins"/>
    <property type="match status" value="1"/>
</dbReference>
<dbReference type="SUPFAM" id="SSF46946">
    <property type="entry name" value="S13-like H2TH domain"/>
    <property type="match status" value="1"/>
</dbReference>
<dbReference type="PROSITE" id="PS51068">
    <property type="entry name" value="FPG_CAT"/>
    <property type="match status" value="1"/>
</dbReference>
<dbReference type="PROSITE" id="PS01242">
    <property type="entry name" value="ZF_FPG_1"/>
    <property type="match status" value="1"/>
</dbReference>
<dbReference type="PROSITE" id="PS51066">
    <property type="entry name" value="ZF_FPG_2"/>
    <property type="match status" value="1"/>
</dbReference>
<sequence length="270" mass="30063">MPELPEVEVTRLGIAPHLRGRRLEGAVVRDSRLRLPVNDDLAARVSGQRLLNLRRRGKYLLLDLERGTILIHLGMSGHLRVLPQSAPVQKHDHVDLLFADDLCLRFHDPRRFGAVLWLDDADHHPLLQHLGPEPLGDVFGAEYLYQRGRNRQIPVKSFLMDAHIVVGVGNIYANESLFAAGIDPRRPAGRIALPRYMKLVQAVRTVLEAAIAQGGTTLRDFTRPDGGNGYFRLSLAVYGREGEPCTHCGAPLQGVRIGGRATIYCSQCQR</sequence>
<organism>
    <name type="scientific">Acidithiobacillus ferrooxidans (strain ATCC 23270 / DSM 14882 / CIP 104768 / NCIMB 8455)</name>
    <name type="common">Ferrobacillus ferrooxidans (strain ATCC 23270)</name>
    <dbReference type="NCBI Taxonomy" id="243159"/>
    <lineage>
        <taxon>Bacteria</taxon>
        <taxon>Pseudomonadati</taxon>
        <taxon>Pseudomonadota</taxon>
        <taxon>Acidithiobacillia</taxon>
        <taxon>Acidithiobacillales</taxon>
        <taxon>Acidithiobacillaceae</taxon>
        <taxon>Acidithiobacillus</taxon>
    </lineage>
</organism>
<keyword id="KW-0227">DNA damage</keyword>
<keyword id="KW-0234">DNA repair</keyword>
<keyword id="KW-0238">DNA-binding</keyword>
<keyword id="KW-0326">Glycosidase</keyword>
<keyword id="KW-0378">Hydrolase</keyword>
<keyword id="KW-0456">Lyase</keyword>
<keyword id="KW-0479">Metal-binding</keyword>
<keyword id="KW-0511">Multifunctional enzyme</keyword>
<keyword id="KW-1185">Reference proteome</keyword>
<keyword id="KW-0862">Zinc</keyword>
<keyword id="KW-0863">Zinc-finger</keyword>
<comment type="function">
    <text evidence="2">Involved in base excision repair of DNA damaged by oxidation or by mutagenic agents. Acts as a DNA glycosylase that recognizes and removes damaged bases. Has a preference for oxidized purines, such as 7,8-dihydro-8-oxoguanine (8-oxoG). Has AP (apurinic/apyrimidinic) lyase activity and introduces nicks in the DNA strand. Cleaves the DNA backbone by beta-delta elimination to generate a single-strand break at the site of the removed base with both 3'- and 5'-phosphates.</text>
</comment>
<comment type="catalytic activity">
    <reaction evidence="2">
        <text>Hydrolysis of DNA containing ring-opened 7-methylguanine residues, releasing 2,6-diamino-4-hydroxy-5-(N-methyl)formamidopyrimidine.</text>
        <dbReference type="EC" id="3.2.2.23"/>
    </reaction>
</comment>
<comment type="catalytic activity">
    <reaction evidence="2">
        <text>2'-deoxyribonucleotide-(2'-deoxyribose 5'-phosphate)-2'-deoxyribonucleotide-DNA = a 3'-end 2'-deoxyribonucleotide-(2,3-dehydro-2,3-deoxyribose 5'-phosphate)-DNA + a 5'-end 5'-phospho-2'-deoxyribonucleoside-DNA + H(+)</text>
        <dbReference type="Rhea" id="RHEA:66592"/>
        <dbReference type="Rhea" id="RHEA-COMP:13180"/>
        <dbReference type="Rhea" id="RHEA-COMP:16897"/>
        <dbReference type="Rhea" id="RHEA-COMP:17067"/>
        <dbReference type="ChEBI" id="CHEBI:15378"/>
        <dbReference type="ChEBI" id="CHEBI:136412"/>
        <dbReference type="ChEBI" id="CHEBI:157695"/>
        <dbReference type="ChEBI" id="CHEBI:167181"/>
        <dbReference type="EC" id="4.2.99.18"/>
    </reaction>
</comment>
<comment type="cofactor">
    <cofactor evidence="2">
        <name>Zn(2+)</name>
        <dbReference type="ChEBI" id="CHEBI:29105"/>
    </cofactor>
    <text evidence="2">Binds 1 zinc ion per subunit.</text>
</comment>
<comment type="subunit">
    <text evidence="2">Monomer.</text>
</comment>
<comment type="similarity">
    <text evidence="2">Belongs to the FPG family.</text>
</comment>
<reference key="1">
    <citation type="journal article" date="2008" name="BMC Genomics">
        <title>Acidithiobacillus ferrooxidans metabolism: from genome sequence to industrial applications.</title>
        <authorList>
            <person name="Valdes J."/>
            <person name="Pedroso I."/>
            <person name="Quatrini R."/>
            <person name="Dodson R.J."/>
            <person name="Tettelin H."/>
            <person name="Blake R. II"/>
            <person name="Eisen J.A."/>
            <person name="Holmes D.S."/>
        </authorList>
    </citation>
    <scope>NUCLEOTIDE SEQUENCE [LARGE SCALE GENOMIC DNA]</scope>
    <source>
        <strain>ATCC 23270 / DSM 14882 / CIP 104768 / NCIMB 8455</strain>
    </source>
</reference>
<evidence type="ECO:0000250" key="1"/>
<evidence type="ECO:0000255" key="2">
    <source>
        <dbReference type="HAMAP-Rule" id="MF_00103"/>
    </source>
</evidence>
<gene>
    <name evidence="2" type="primary">mutM</name>
    <name evidence="2" type="synonym">fpg</name>
    <name type="ordered locus">AFE_2758</name>
</gene>
<proteinExistence type="inferred from homology"/>
<accession>B7J8I7</accession>